<reference key="1">
    <citation type="journal article" date="2002" name="Proc. Natl. Acad. Sci. U.S.A.">
        <title>The Brucella suis genome reveals fundamental similarities between animal and plant pathogens and symbionts.</title>
        <authorList>
            <person name="Paulsen I.T."/>
            <person name="Seshadri R."/>
            <person name="Nelson K.E."/>
            <person name="Eisen J.A."/>
            <person name="Heidelberg J.F."/>
            <person name="Read T.D."/>
            <person name="Dodson R.J."/>
            <person name="Umayam L.A."/>
            <person name="Brinkac L.M."/>
            <person name="Beanan M.J."/>
            <person name="Daugherty S.C."/>
            <person name="DeBoy R.T."/>
            <person name="Durkin A.S."/>
            <person name="Kolonay J.F."/>
            <person name="Madupu R."/>
            <person name="Nelson W.C."/>
            <person name="Ayodeji B."/>
            <person name="Kraul M."/>
            <person name="Shetty J."/>
            <person name="Malek J.A."/>
            <person name="Van Aken S.E."/>
            <person name="Riedmuller S."/>
            <person name="Tettelin H."/>
            <person name="Gill S.R."/>
            <person name="White O."/>
            <person name="Salzberg S.L."/>
            <person name="Hoover D.L."/>
            <person name="Lindler L.E."/>
            <person name="Halling S.M."/>
            <person name="Boyle S.M."/>
            <person name="Fraser C.M."/>
        </authorList>
    </citation>
    <scope>NUCLEOTIDE SEQUENCE [LARGE SCALE GENOMIC DNA]</scope>
    <source>
        <strain>1330</strain>
    </source>
</reference>
<reference key="2">
    <citation type="journal article" date="2011" name="J. Bacteriol.">
        <title>Revised genome sequence of Brucella suis 1330.</title>
        <authorList>
            <person name="Tae H."/>
            <person name="Shallom S."/>
            <person name="Settlage R."/>
            <person name="Preston D."/>
            <person name="Adams L.G."/>
            <person name="Garner H.R."/>
        </authorList>
    </citation>
    <scope>NUCLEOTIDE SEQUENCE [LARGE SCALE GENOMIC DNA]</scope>
    <source>
        <strain>1330</strain>
    </source>
</reference>
<organism>
    <name type="scientific">Brucella suis biovar 1 (strain 1330)</name>
    <dbReference type="NCBI Taxonomy" id="204722"/>
    <lineage>
        <taxon>Bacteria</taxon>
        <taxon>Pseudomonadati</taxon>
        <taxon>Pseudomonadota</taxon>
        <taxon>Alphaproteobacteria</taxon>
        <taxon>Hyphomicrobiales</taxon>
        <taxon>Brucellaceae</taxon>
        <taxon>Brucella/Ochrobactrum group</taxon>
        <taxon>Brucella</taxon>
    </lineage>
</organism>
<name>FBPC_BRUSU</name>
<gene>
    <name evidence="1" type="primary">fbpC</name>
    <name type="ordered locus">BRA0718</name>
    <name type="ordered locus">BS1330_II0711</name>
</gene>
<evidence type="ECO:0000255" key="1">
    <source>
        <dbReference type="HAMAP-Rule" id="MF_01706"/>
    </source>
</evidence>
<comment type="function">
    <text evidence="1">Part of the ABC transporter complex FbpABC involved in Fe(3+) ions import. Responsible for energy coupling to the transport system.</text>
</comment>
<comment type="catalytic activity">
    <reaction evidence="1">
        <text>Fe(3+)(out) + ATP + H2O = Fe(3+)(in) + ADP + phosphate + H(+)</text>
        <dbReference type="Rhea" id="RHEA:12332"/>
        <dbReference type="ChEBI" id="CHEBI:15377"/>
        <dbReference type="ChEBI" id="CHEBI:15378"/>
        <dbReference type="ChEBI" id="CHEBI:29034"/>
        <dbReference type="ChEBI" id="CHEBI:30616"/>
        <dbReference type="ChEBI" id="CHEBI:43474"/>
        <dbReference type="ChEBI" id="CHEBI:456216"/>
        <dbReference type="EC" id="7.2.2.7"/>
    </reaction>
</comment>
<comment type="subunit">
    <text evidence="1">The complex is composed of two ATP-binding proteins (FbpC), two transmembrane proteins (FbpB) and a solute-binding protein (FbpA).</text>
</comment>
<comment type="subcellular location">
    <subcellularLocation>
        <location evidence="1">Cell inner membrane</location>
        <topology evidence="1">Peripheral membrane protein</topology>
    </subcellularLocation>
</comment>
<comment type="similarity">
    <text evidence="1">Belongs to the ABC transporter superfamily. Fe(3+) ion importer (TC 3.A.1.10) family.</text>
</comment>
<protein>
    <recommendedName>
        <fullName evidence="1">Fe(3+) ions import ATP-binding protein FbpC</fullName>
        <ecNumber evidence="1">7.2.2.7</ecNumber>
    </recommendedName>
</protein>
<keyword id="KW-0067">ATP-binding</keyword>
<keyword id="KW-0997">Cell inner membrane</keyword>
<keyword id="KW-1003">Cell membrane</keyword>
<keyword id="KW-0406">Ion transport</keyword>
<keyword id="KW-0408">Iron</keyword>
<keyword id="KW-0410">Iron transport</keyword>
<keyword id="KW-0472">Membrane</keyword>
<keyword id="KW-0547">Nucleotide-binding</keyword>
<keyword id="KW-1278">Translocase</keyword>
<keyword id="KW-0813">Transport</keyword>
<dbReference type="EC" id="7.2.2.7" evidence="1"/>
<dbReference type="EMBL" id="AE014292">
    <property type="protein sequence ID" value="AAN33901.1"/>
    <property type="molecule type" value="Genomic_DNA"/>
</dbReference>
<dbReference type="EMBL" id="CP002998">
    <property type="protein sequence ID" value="AEM20176.1"/>
    <property type="molecule type" value="Genomic_DNA"/>
</dbReference>
<dbReference type="RefSeq" id="WP_006192100.1">
    <property type="nucleotide sequence ID" value="NZ_KN046805.1"/>
</dbReference>
<dbReference type="SMR" id="Q8FVV5"/>
<dbReference type="GeneID" id="45053740"/>
<dbReference type="KEGG" id="bms:BRA0718"/>
<dbReference type="KEGG" id="bsi:BS1330_II0711"/>
<dbReference type="PATRIC" id="fig|204722.21.peg.2353"/>
<dbReference type="HOGENOM" id="CLU_000604_1_1_5"/>
<dbReference type="PhylomeDB" id="Q8FVV5"/>
<dbReference type="Proteomes" id="UP000007104">
    <property type="component" value="Chromosome II"/>
</dbReference>
<dbReference type="GO" id="GO:0043190">
    <property type="term" value="C:ATP-binding cassette (ABC) transporter complex"/>
    <property type="evidence" value="ECO:0007669"/>
    <property type="project" value="InterPro"/>
</dbReference>
<dbReference type="GO" id="GO:0015408">
    <property type="term" value="F:ABC-type ferric iron transporter activity"/>
    <property type="evidence" value="ECO:0007669"/>
    <property type="project" value="UniProtKB-EC"/>
</dbReference>
<dbReference type="GO" id="GO:0005524">
    <property type="term" value="F:ATP binding"/>
    <property type="evidence" value="ECO:0007669"/>
    <property type="project" value="UniProtKB-KW"/>
</dbReference>
<dbReference type="GO" id="GO:0016887">
    <property type="term" value="F:ATP hydrolysis activity"/>
    <property type="evidence" value="ECO:0007669"/>
    <property type="project" value="InterPro"/>
</dbReference>
<dbReference type="FunFam" id="3.40.50.300:FF:000425">
    <property type="entry name" value="Probable ABC transporter, ATP-binding subunit"/>
    <property type="match status" value="1"/>
</dbReference>
<dbReference type="Gene3D" id="2.40.50.100">
    <property type="match status" value="1"/>
</dbReference>
<dbReference type="Gene3D" id="3.40.50.300">
    <property type="entry name" value="P-loop containing nucleotide triphosphate hydrolases"/>
    <property type="match status" value="1"/>
</dbReference>
<dbReference type="InterPro" id="IPR003593">
    <property type="entry name" value="AAA+_ATPase"/>
</dbReference>
<dbReference type="InterPro" id="IPR050093">
    <property type="entry name" value="ABC_SmlMolc_Importer"/>
</dbReference>
<dbReference type="InterPro" id="IPR003439">
    <property type="entry name" value="ABC_transporter-like_ATP-bd"/>
</dbReference>
<dbReference type="InterPro" id="IPR017871">
    <property type="entry name" value="ABC_transporter-like_CS"/>
</dbReference>
<dbReference type="InterPro" id="IPR008995">
    <property type="entry name" value="Mo/tungstate-bd_C_term_dom"/>
</dbReference>
<dbReference type="InterPro" id="IPR027417">
    <property type="entry name" value="P-loop_NTPase"/>
</dbReference>
<dbReference type="InterPro" id="IPR013611">
    <property type="entry name" value="Transp-assoc_OB_typ2"/>
</dbReference>
<dbReference type="PANTHER" id="PTHR42781">
    <property type="entry name" value="SPERMIDINE/PUTRESCINE IMPORT ATP-BINDING PROTEIN POTA"/>
    <property type="match status" value="1"/>
</dbReference>
<dbReference type="PANTHER" id="PTHR42781:SF4">
    <property type="entry name" value="SPERMIDINE_PUTRESCINE IMPORT ATP-BINDING PROTEIN POTA"/>
    <property type="match status" value="1"/>
</dbReference>
<dbReference type="Pfam" id="PF00005">
    <property type="entry name" value="ABC_tran"/>
    <property type="match status" value="1"/>
</dbReference>
<dbReference type="Pfam" id="PF08402">
    <property type="entry name" value="TOBE_2"/>
    <property type="match status" value="1"/>
</dbReference>
<dbReference type="SMART" id="SM00382">
    <property type="entry name" value="AAA"/>
    <property type="match status" value="1"/>
</dbReference>
<dbReference type="SUPFAM" id="SSF50331">
    <property type="entry name" value="MOP-like"/>
    <property type="match status" value="1"/>
</dbReference>
<dbReference type="SUPFAM" id="SSF52540">
    <property type="entry name" value="P-loop containing nucleoside triphosphate hydrolases"/>
    <property type="match status" value="1"/>
</dbReference>
<dbReference type="PROSITE" id="PS00211">
    <property type="entry name" value="ABC_TRANSPORTER_1"/>
    <property type="match status" value="1"/>
</dbReference>
<dbReference type="PROSITE" id="PS50893">
    <property type="entry name" value="ABC_TRANSPORTER_2"/>
    <property type="match status" value="1"/>
</dbReference>
<dbReference type="PROSITE" id="PS51242">
    <property type="entry name" value="FBPC"/>
    <property type="match status" value="1"/>
</dbReference>
<proteinExistence type="inferred from homology"/>
<feature type="chain" id="PRO_0000092346" description="Fe(3+) ions import ATP-binding protein FbpC">
    <location>
        <begin position="1"/>
        <end position="353"/>
    </location>
</feature>
<feature type="domain" description="ABC transporter" evidence="1">
    <location>
        <begin position="9"/>
        <end position="239"/>
    </location>
</feature>
<feature type="binding site" evidence="1">
    <location>
        <begin position="41"/>
        <end position="48"/>
    </location>
    <ligand>
        <name>ATP</name>
        <dbReference type="ChEBI" id="CHEBI:30616"/>
    </ligand>
</feature>
<accession>Q8FVV5</accession>
<accession>G0KD88</accession>
<sequence length="353" mass="38004">MTAIRPGSVTFENVTKKFGNFTALPNLSLTVEPGTLVTLLGPSGCGKTTTLRLLAGLEHPTSGRILVGGKDVTNLPANERDVSMVFQSYALFPHMTSLENVAYGLESSGFKKNEARERAEEGLKLVGLGGMGHRLPAELSGGQQQRVAVARALVLEPQVLLLDEPLSNLDARLRRRVRTEIRELQQRLGFTADYVTHDQDEALAVSDTIIVMKEGGIAQKGSPRDLYEAPASAFIADFMGEANVVPCEVISAENGEAVIRVAGLTHRVPARNAQPRPAQLAIRPNAVTLQPQAGGGFSGTVAHSAYLGDHIEYEIETEHGKLFIVDPAVEQSLPLQTDVSIQFKTRGLAIINQ</sequence>